<organism>
    <name type="scientific">Catharanthus roseus</name>
    <name type="common">Madagascar periwinkle</name>
    <name type="synonym">Vinca rosea</name>
    <dbReference type="NCBI Taxonomy" id="4058"/>
    <lineage>
        <taxon>Eukaryota</taxon>
        <taxon>Viridiplantae</taxon>
        <taxon>Streptophyta</taxon>
        <taxon>Embryophyta</taxon>
        <taxon>Tracheophyta</taxon>
        <taxon>Spermatophyta</taxon>
        <taxon>Magnoliopsida</taxon>
        <taxon>eudicotyledons</taxon>
        <taxon>Gunneridae</taxon>
        <taxon>Pentapetalae</taxon>
        <taxon>asterids</taxon>
        <taxon>lamiids</taxon>
        <taxon>Gentianales</taxon>
        <taxon>Apocynaceae</taxon>
        <taxon>Rauvolfioideae</taxon>
        <taxon>Vinceae</taxon>
        <taxon>Catharanthinae</taxon>
        <taxon>Catharanthus</taxon>
    </lineage>
</organism>
<gene>
    <name type="primary">SSRP1</name>
    <name type="synonym">HMG</name>
</gene>
<sequence length="639" mass="71466">MADGHLFNNITLGGRGGTNPGQLRVHSGGILWKKQGGAKAVEVDKSDMVGLTWMKVPRSNQLGVRIKDGLFYKFTGFRDQDVASLTSYLQSTCGITPEEKQLSVSGKNWGEVDLNGNMLTFLVGSKQAFEVSLADVAQTQLQGKNDVMLEFMWMILLEQMRKNSLMEISFHVPNSNTQFVGDENRPPAQVFRDKIMSMADVGAGGEDAVVTFEGIAILTPRGRYNVELHLSFLRLQGQANDFKIQYSSVVRLFLLPKSNQPHTFVVVTLDPPIRKGQTLYPHIVLQFETDYVVDSSLSISEDLLSTKYKDKLEPTYKGLIHEVFTMILRGLSGAKVTRPGKFRSCQDGYAVKSSLKAEDGVLYPLEKSFFFLPKPPTLILHEEIDYVEFERHAAGGSNMHYFDLLIRLKTEQEHLFRNIQRNEYHNLFDFISSKGLKIMNLGADKAADAITAVLQEDDDDAVDPHLERIKNEAGGDESDEEDEDFVADIDDEGSPTDDSGEGESDGSDSGNEEIPTKKKPKKEASAPKVPLSRKKVGDDDNMKKKKQKKKKDPNAPKSISAFMFFSQTERENVKKDNPGIAFTDVGKVLGDRCNKCQLRKKHLLKQRLVADKKRYTDEISNYKNPQPMNVDSGNDSDSA</sequence>
<name>SSRP1_CATRO</name>
<evidence type="ECO:0000250" key="1"/>
<evidence type="ECO:0000255" key="2">
    <source>
        <dbReference type="PROSITE-ProRule" id="PRU00267"/>
    </source>
</evidence>
<evidence type="ECO:0000256" key="3">
    <source>
        <dbReference type="SAM" id="MobiDB-lite"/>
    </source>
</evidence>
<evidence type="ECO:0000305" key="4"/>
<keyword id="KW-0158">Chromosome</keyword>
<keyword id="KW-0227">DNA damage</keyword>
<keyword id="KW-0234">DNA repair</keyword>
<keyword id="KW-0235">DNA replication</keyword>
<keyword id="KW-0238">DNA-binding</keyword>
<keyword id="KW-0539">Nucleus</keyword>
<keyword id="KW-0804">Transcription</keyword>
<keyword id="KW-0805">Transcription regulation</keyword>
<accession>Q39601</accession>
<comment type="function">
    <text evidence="4">Component of the FACT complex, a general chromatin factor that acts to reorganize nucleosomes. The FACT complex is involved in multiple processes that require DNA as a template such as mRNA elongation, DNA replication and DNA repair. During transcription elongation the FACT complex acts as a histone chaperone that both destabilizes and restores nucleosomal structure. It facilitates the passage of RNA polymerase II and transcription by promoting the dissociation of one histone H2A-H2B dimer from the nucleosome, then subsequently promotes the reestablishment of the nucleosome following the passage of RNA polymerase II. Binds specifically to double-stranded DNA (Probable).</text>
</comment>
<comment type="subunit">
    <text evidence="1">Component of the FACT complex, a stable heterodimer of SPT16 and SSRP1.</text>
</comment>
<comment type="subcellular location">
    <subcellularLocation>
        <location evidence="2">Nucleus</location>
    </subcellularLocation>
    <subcellularLocation>
        <location evidence="1">Chromosome</location>
    </subcellularLocation>
</comment>
<comment type="similarity">
    <text evidence="4">Belongs to the SSRP1 family.</text>
</comment>
<feature type="chain" id="PRO_0000048611" description="FACT complex subunit SSRP1">
    <location>
        <begin position="1"/>
        <end position="639"/>
    </location>
</feature>
<feature type="DNA-binding region" description="HMG box" evidence="2">
    <location>
        <begin position="555"/>
        <end position="623"/>
    </location>
</feature>
<feature type="region of interest" description="Disordered" evidence="3">
    <location>
        <begin position="469"/>
        <end position="559"/>
    </location>
</feature>
<feature type="region of interest" description="Disordered" evidence="3">
    <location>
        <begin position="612"/>
        <end position="639"/>
    </location>
</feature>
<feature type="compositionally biased region" description="Acidic residues" evidence="3">
    <location>
        <begin position="474"/>
        <end position="506"/>
    </location>
</feature>
<feature type="compositionally biased region" description="Polar residues" evidence="3">
    <location>
        <begin position="618"/>
        <end position="639"/>
    </location>
</feature>
<protein>
    <recommendedName>
        <fullName>FACT complex subunit SSRP1</fullName>
    </recommendedName>
    <alternativeName>
        <fullName>Facilitates chromatin transcription complex subunit SSRP1</fullName>
    </alternativeName>
    <alternativeName>
        <fullName>Recombination signal sequence recognition protein 1</fullName>
    </alternativeName>
</protein>
<proteinExistence type="evidence at transcript level"/>
<reference key="1">
    <citation type="journal article" date="1995" name="Gene">
        <title>A cDNA encoding a plant homologue to animal HMG box proteins involved in structure-specific recognition of DNA (SSRP family).</title>
        <authorList>
            <person name="Hotz M."/>
            <person name="Lurz G."/>
            <person name="Schroeder J."/>
        </authorList>
    </citation>
    <scope>NUCLEOTIDE SEQUENCE [MRNA]</scope>
</reference>
<dbReference type="EMBL" id="Z28410">
    <property type="protein sequence ID" value="CAA82251.1"/>
    <property type="molecule type" value="mRNA"/>
</dbReference>
<dbReference type="PIR" id="S39242">
    <property type="entry name" value="S39242"/>
</dbReference>
<dbReference type="SMR" id="Q39601"/>
<dbReference type="GO" id="GO:0035101">
    <property type="term" value="C:FACT complex"/>
    <property type="evidence" value="ECO:0007669"/>
    <property type="project" value="TreeGrafter"/>
</dbReference>
<dbReference type="GO" id="GO:0003677">
    <property type="term" value="F:DNA binding"/>
    <property type="evidence" value="ECO:0007669"/>
    <property type="project" value="UniProtKB-KW"/>
</dbReference>
<dbReference type="GO" id="GO:0042393">
    <property type="term" value="F:histone binding"/>
    <property type="evidence" value="ECO:0007669"/>
    <property type="project" value="TreeGrafter"/>
</dbReference>
<dbReference type="GO" id="GO:0031491">
    <property type="term" value="F:nucleosome binding"/>
    <property type="evidence" value="ECO:0007669"/>
    <property type="project" value="TreeGrafter"/>
</dbReference>
<dbReference type="GO" id="GO:0006281">
    <property type="term" value="P:DNA repair"/>
    <property type="evidence" value="ECO:0007669"/>
    <property type="project" value="UniProtKB-KW"/>
</dbReference>
<dbReference type="GO" id="GO:0006260">
    <property type="term" value="P:DNA replication"/>
    <property type="evidence" value="ECO:0007669"/>
    <property type="project" value="UniProtKB-KW"/>
</dbReference>
<dbReference type="CDD" id="cd13230">
    <property type="entry name" value="PH1_SSRP1-like"/>
    <property type="match status" value="1"/>
</dbReference>
<dbReference type="CDD" id="cd13231">
    <property type="entry name" value="PH2_SSRP1-like"/>
    <property type="match status" value="1"/>
</dbReference>
<dbReference type="FunFam" id="2.30.29.220:FF:000002">
    <property type="entry name" value="FACT complex subunit SSRP1"/>
    <property type="match status" value="1"/>
</dbReference>
<dbReference type="FunFam" id="2.30.29.30:FF:000214">
    <property type="entry name" value="FACT complex subunit SSRP1"/>
    <property type="match status" value="1"/>
</dbReference>
<dbReference type="FunFam" id="2.30.29.30:FF:000298">
    <property type="entry name" value="FACT complex subunit SSRP1"/>
    <property type="match status" value="1"/>
</dbReference>
<dbReference type="FunFam" id="2.30.29.150:FF:000001">
    <property type="entry name" value="Fact complex subunit ssrp1"/>
    <property type="match status" value="1"/>
</dbReference>
<dbReference type="Gene3D" id="2.30.29.150">
    <property type="match status" value="1"/>
</dbReference>
<dbReference type="Gene3D" id="1.10.30.10">
    <property type="entry name" value="High mobility group box domain"/>
    <property type="match status" value="1"/>
</dbReference>
<dbReference type="Gene3D" id="2.30.29.30">
    <property type="entry name" value="Pleckstrin-homology domain (PH domain)/Phosphotyrosine-binding domain (PTB)"/>
    <property type="match status" value="2"/>
</dbReference>
<dbReference type="Gene3D" id="2.30.29.220">
    <property type="entry name" value="Structure-specific recognition protein (SSRP1)"/>
    <property type="match status" value="1"/>
</dbReference>
<dbReference type="InterPro" id="IPR009071">
    <property type="entry name" value="HMG_box_dom"/>
</dbReference>
<dbReference type="InterPro" id="IPR036910">
    <property type="entry name" value="HMG_box_dom_sf"/>
</dbReference>
<dbReference type="InterPro" id="IPR011993">
    <property type="entry name" value="PH-like_dom_sf"/>
</dbReference>
<dbReference type="InterPro" id="IPR013719">
    <property type="entry name" value="RTT106/SPT16-like_middle_dom"/>
</dbReference>
<dbReference type="InterPro" id="IPR050454">
    <property type="entry name" value="RTT106/SSRP1_HistChap/FACT"/>
</dbReference>
<dbReference type="InterPro" id="IPR048993">
    <property type="entry name" value="SSRP1-like_PH1"/>
</dbReference>
<dbReference type="InterPro" id="IPR000969">
    <property type="entry name" value="SSRP1/POB3"/>
</dbReference>
<dbReference type="InterPro" id="IPR035417">
    <property type="entry name" value="SSRP1/POB3_N"/>
</dbReference>
<dbReference type="InterPro" id="IPR024954">
    <property type="entry name" value="SSRP1_DD"/>
</dbReference>
<dbReference type="InterPro" id="IPR038167">
    <property type="entry name" value="SSRP1_sf"/>
</dbReference>
<dbReference type="PANTHER" id="PTHR45849">
    <property type="entry name" value="FACT COMPLEX SUBUNIT SSRP1"/>
    <property type="match status" value="1"/>
</dbReference>
<dbReference type="PANTHER" id="PTHR45849:SF1">
    <property type="entry name" value="FACT COMPLEX SUBUNIT SSRP1"/>
    <property type="match status" value="1"/>
</dbReference>
<dbReference type="Pfam" id="PF00505">
    <property type="entry name" value="HMG_box"/>
    <property type="match status" value="1"/>
</dbReference>
<dbReference type="Pfam" id="PF21103">
    <property type="entry name" value="PH1_SSRP1-like"/>
    <property type="match status" value="1"/>
</dbReference>
<dbReference type="Pfam" id="PF17292">
    <property type="entry name" value="POB3_N"/>
    <property type="match status" value="1"/>
</dbReference>
<dbReference type="Pfam" id="PF08512">
    <property type="entry name" value="Rttp106-like_middle"/>
    <property type="match status" value="1"/>
</dbReference>
<dbReference type="Pfam" id="PF03531">
    <property type="entry name" value="SSrecog"/>
    <property type="match status" value="1"/>
</dbReference>
<dbReference type="PRINTS" id="PR00887">
    <property type="entry name" value="SSRCOGNITION"/>
</dbReference>
<dbReference type="SMART" id="SM00398">
    <property type="entry name" value="HMG"/>
    <property type="match status" value="1"/>
</dbReference>
<dbReference type="SMART" id="SM01287">
    <property type="entry name" value="Rtt106"/>
    <property type="match status" value="1"/>
</dbReference>
<dbReference type="SUPFAM" id="SSF47095">
    <property type="entry name" value="HMG-box"/>
    <property type="match status" value="1"/>
</dbReference>
<dbReference type="SUPFAM" id="SSF50729">
    <property type="entry name" value="PH domain-like"/>
    <property type="match status" value="1"/>
</dbReference>
<dbReference type="PROSITE" id="PS50118">
    <property type="entry name" value="HMG_BOX_2"/>
    <property type="match status" value="1"/>
</dbReference>